<dbReference type="EMBL" id="AP003335">
    <property type="protein sequence ID" value="BAD73480.1"/>
    <property type="molecule type" value="Genomic_DNA"/>
</dbReference>
<dbReference type="EMBL" id="AP008207">
    <property type="protein sequence ID" value="BAF05782.1"/>
    <property type="molecule type" value="Genomic_DNA"/>
</dbReference>
<dbReference type="EMBL" id="AP014957">
    <property type="protein sequence ID" value="BAS73688.1"/>
    <property type="molecule type" value="Genomic_DNA"/>
</dbReference>
<dbReference type="EMBL" id="CM000138">
    <property type="protein sequence ID" value="EAZ13091.1"/>
    <property type="status" value="ALT_SEQ"/>
    <property type="molecule type" value="Genomic_DNA"/>
</dbReference>
<dbReference type="EMBL" id="AK119801">
    <property type="protein sequence ID" value="BAG99801.1"/>
    <property type="molecule type" value="mRNA"/>
</dbReference>
<dbReference type="RefSeq" id="XP_015622290.1">
    <property type="nucleotide sequence ID" value="XM_015766804.1"/>
</dbReference>
<dbReference type="RefSeq" id="XP_015640520.1">
    <property type="nucleotide sequence ID" value="XM_015785034.1"/>
</dbReference>
<dbReference type="PDB" id="1YSH">
    <property type="method" value="EM"/>
    <property type="resolution" value="9.50 A"/>
    <property type="chains" value="D=10-82"/>
</dbReference>
<dbReference type="PDBsum" id="1YSH"/>
<dbReference type="SMR" id="P0DKK1"/>
<dbReference type="FunCoup" id="P0DKK1">
    <property type="interactions" value="1853"/>
</dbReference>
<dbReference type="STRING" id="39947.P0DKK1"/>
<dbReference type="PaxDb" id="39947-P0DKK1"/>
<dbReference type="EnsemblPlants" id="Os01t0679700-02">
    <property type="protein sequence ID" value="Os01t0679700-02"/>
    <property type="gene ID" value="Os01g0679700"/>
</dbReference>
<dbReference type="EnsemblPlants" id="Os05t0557000-01">
    <property type="protein sequence ID" value="Os05t0557000-01"/>
    <property type="gene ID" value="Os05g0557000"/>
</dbReference>
<dbReference type="Gramene" id="Os01t0679700-02">
    <property type="protein sequence ID" value="Os01t0679700-02"/>
    <property type="gene ID" value="Os01g0679700"/>
</dbReference>
<dbReference type="Gramene" id="Os05t0557000-01">
    <property type="protein sequence ID" value="Os05t0557000-01"/>
    <property type="gene ID" value="Os05g0557000"/>
</dbReference>
<dbReference type="KEGG" id="dosa:Os01g0679700"/>
<dbReference type="eggNOG" id="KOG0402">
    <property type="taxonomic scope" value="Eukaryota"/>
</dbReference>
<dbReference type="InParanoid" id="P0DKK1"/>
<dbReference type="OMA" id="GPRYGRK"/>
<dbReference type="OrthoDB" id="1842026at2759"/>
<dbReference type="EvolutionaryTrace" id="P0DKK1"/>
<dbReference type="Proteomes" id="UP000000763">
    <property type="component" value="Chromosome 1"/>
</dbReference>
<dbReference type="Proteomes" id="UP000007752">
    <property type="component" value="Chromosome 1"/>
</dbReference>
<dbReference type="Proteomes" id="UP000059680">
    <property type="component" value="Chromosome 1"/>
</dbReference>
<dbReference type="ExpressionAtlas" id="P0DKK1">
    <property type="expression patterns" value="baseline and differential"/>
</dbReference>
<dbReference type="GO" id="GO:0009536">
    <property type="term" value="C:plastid"/>
    <property type="evidence" value="ECO:0007669"/>
    <property type="project" value="UniProtKB-ARBA"/>
</dbReference>
<dbReference type="GO" id="GO:1990904">
    <property type="term" value="C:ribonucleoprotein complex"/>
    <property type="evidence" value="ECO:0007669"/>
    <property type="project" value="UniProtKB-KW"/>
</dbReference>
<dbReference type="GO" id="GO:0005840">
    <property type="term" value="C:ribosome"/>
    <property type="evidence" value="ECO:0007669"/>
    <property type="project" value="UniProtKB-KW"/>
</dbReference>
<dbReference type="GO" id="GO:0003735">
    <property type="term" value="F:structural constituent of ribosome"/>
    <property type="evidence" value="ECO:0007669"/>
    <property type="project" value="InterPro"/>
</dbReference>
<dbReference type="GO" id="GO:0008270">
    <property type="term" value="F:zinc ion binding"/>
    <property type="evidence" value="ECO:0007669"/>
    <property type="project" value="UniProtKB-KW"/>
</dbReference>
<dbReference type="GO" id="GO:0006412">
    <property type="term" value="P:translation"/>
    <property type="evidence" value="ECO:0007669"/>
    <property type="project" value="InterPro"/>
</dbReference>
<dbReference type="FunFam" id="2.20.25.30:FF:000002">
    <property type="entry name" value="60S ribosomal protein L37a"/>
    <property type="match status" value="1"/>
</dbReference>
<dbReference type="Gene3D" id="2.20.25.30">
    <property type="match status" value="1"/>
</dbReference>
<dbReference type="HAMAP" id="MF_00327">
    <property type="entry name" value="Ribosomal_eL43"/>
    <property type="match status" value="1"/>
</dbReference>
<dbReference type="InterPro" id="IPR011331">
    <property type="entry name" value="Ribosomal_eL37/eL43"/>
</dbReference>
<dbReference type="InterPro" id="IPR002674">
    <property type="entry name" value="Ribosomal_eL43"/>
</dbReference>
<dbReference type="InterPro" id="IPR011332">
    <property type="entry name" value="Ribosomal_zn-bd"/>
</dbReference>
<dbReference type="NCBIfam" id="TIGR00280">
    <property type="entry name" value="eL43_euk_arch"/>
    <property type="match status" value="1"/>
</dbReference>
<dbReference type="NCBIfam" id="NF003058">
    <property type="entry name" value="PRK03976.1"/>
    <property type="match status" value="1"/>
</dbReference>
<dbReference type="PANTHER" id="PTHR48149">
    <property type="entry name" value="60S RIBOSOMAL PROTEIN L37A-2"/>
    <property type="match status" value="1"/>
</dbReference>
<dbReference type="PANTHER" id="PTHR48149:SF1">
    <property type="entry name" value="LARGE RIBOSOMAL SUBUNIT PROTEIN EL43Y"/>
    <property type="match status" value="1"/>
</dbReference>
<dbReference type="Pfam" id="PF01780">
    <property type="entry name" value="Ribosomal_L37ae"/>
    <property type="match status" value="1"/>
</dbReference>
<dbReference type="SUPFAM" id="SSF57829">
    <property type="entry name" value="Zn-binding ribosomal proteins"/>
    <property type="match status" value="1"/>
</dbReference>
<keyword id="KW-0002">3D-structure</keyword>
<keyword id="KW-0479">Metal-binding</keyword>
<keyword id="KW-1185">Reference proteome</keyword>
<keyword id="KW-0687">Ribonucleoprotein</keyword>
<keyword id="KW-0689">Ribosomal protein</keyword>
<keyword id="KW-0862">Zinc</keyword>
<keyword id="KW-0863">Zinc-finger</keyword>
<proteinExistence type="evidence at protein level"/>
<comment type="similarity">
    <text evidence="1">Belongs to the eukaryotic ribosomal protein eL43 family.</text>
</comment>
<comment type="sequence caution" evidence="1">
    <conflict type="erroneous gene model prediction">
        <sequence resource="EMBL-CDS" id="EAZ13091"/>
    </conflict>
</comment>
<feature type="chain" id="PRO_0000436230" description="Large ribosomal subunit protein eL43z">
    <location>
        <begin position="1"/>
        <end position="92"/>
    </location>
</feature>
<feature type="zinc finger region" description="C4-type">
    <location>
        <begin position="39"/>
        <end position="60"/>
    </location>
</feature>
<gene>
    <name evidence="2" type="ordered locus">Os01g0679700</name>
    <name evidence="1" type="ordered locus">LOC_Os01g48770</name>
    <name type="ORF">B1144G04.40-1</name>
    <name evidence="3" type="ORF">OsJ_03011</name>
</gene>
<name>RL371_ORYSJ</name>
<evidence type="ECO:0000305" key="1"/>
<evidence type="ECO:0000312" key="2">
    <source>
        <dbReference type="EMBL" id="BAS73688.1"/>
    </source>
</evidence>
<evidence type="ECO:0000312" key="3">
    <source>
        <dbReference type="EMBL" id="EAZ13091.1"/>
    </source>
</evidence>
<organism>
    <name type="scientific">Oryza sativa subsp. japonica</name>
    <name type="common">Rice</name>
    <dbReference type="NCBI Taxonomy" id="39947"/>
    <lineage>
        <taxon>Eukaryota</taxon>
        <taxon>Viridiplantae</taxon>
        <taxon>Streptophyta</taxon>
        <taxon>Embryophyta</taxon>
        <taxon>Tracheophyta</taxon>
        <taxon>Spermatophyta</taxon>
        <taxon>Magnoliopsida</taxon>
        <taxon>Liliopsida</taxon>
        <taxon>Poales</taxon>
        <taxon>Poaceae</taxon>
        <taxon>BOP clade</taxon>
        <taxon>Oryzoideae</taxon>
        <taxon>Oryzeae</taxon>
        <taxon>Oryzinae</taxon>
        <taxon>Oryza</taxon>
        <taxon>Oryza sativa</taxon>
    </lineage>
</organism>
<protein>
    <recommendedName>
        <fullName evidence="1">Large ribosomal subunit protein eL43z</fullName>
    </recommendedName>
    <alternativeName>
        <fullName>60S ribosomal protein L37a-1</fullName>
    </alternativeName>
</protein>
<sequence length="92" mass="10243">MTKRTKKAGIVGKYGTRYGASLRKQIKKMEVSQHSKYFCEFCGKFAVKRKAVGIWGCKDCGKVKAGGAYTMNTASAVTVRSTIRRLREQTEA</sequence>
<accession>P0DKK1</accession>
<accession>A2ZWJ4</accession>
<accession>B7E3N1</accession>
<accession>Q0JKE6</accession>
<accession>Q5QM99</accession>
<accession>Q6I606</accession>
<reference key="1">
    <citation type="journal article" date="2002" name="Nature">
        <title>The genome sequence and structure of rice chromosome 1.</title>
        <authorList>
            <person name="Sasaki T."/>
            <person name="Matsumoto T."/>
            <person name="Yamamoto K."/>
            <person name="Sakata K."/>
            <person name="Baba T."/>
            <person name="Katayose Y."/>
            <person name="Wu J."/>
            <person name="Niimura Y."/>
            <person name="Cheng Z."/>
            <person name="Nagamura Y."/>
            <person name="Antonio B.A."/>
            <person name="Kanamori H."/>
            <person name="Hosokawa S."/>
            <person name="Masukawa M."/>
            <person name="Arikawa K."/>
            <person name="Chiden Y."/>
            <person name="Hayashi M."/>
            <person name="Okamoto M."/>
            <person name="Ando T."/>
            <person name="Aoki H."/>
            <person name="Arita K."/>
            <person name="Hamada M."/>
            <person name="Harada C."/>
            <person name="Hijishita S."/>
            <person name="Honda M."/>
            <person name="Ichikawa Y."/>
            <person name="Idonuma A."/>
            <person name="Iijima M."/>
            <person name="Ikeda M."/>
            <person name="Ikeno M."/>
            <person name="Ito S."/>
            <person name="Ito T."/>
            <person name="Ito Y."/>
            <person name="Ito Y."/>
            <person name="Iwabuchi A."/>
            <person name="Kamiya K."/>
            <person name="Karasawa W."/>
            <person name="Katagiri S."/>
            <person name="Kikuta A."/>
            <person name="Kobayashi N."/>
            <person name="Kono I."/>
            <person name="Machita K."/>
            <person name="Maehara T."/>
            <person name="Mizuno H."/>
            <person name="Mizubayashi T."/>
            <person name="Mukai Y."/>
            <person name="Nagasaki H."/>
            <person name="Nakashima M."/>
            <person name="Nakama Y."/>
            <person name="Nakamichi Y."/>
            <person name="Nakamura M."/>
            <person name="Namiki N."/>
            <person name="Negishi M."/>
            <person name="Ohta I."/>
            <person name="Ono N."/>
            <person name="Saji S."/>
            <person name="Sakai K."/>
            <person name="Shibata M."/>
            <person name="Shimokawa T."/>
            <person name="Shomura A."/>
            <person name="Song J."/>
            <person name="Takazaki Y."/>
            <person name="Terasawa K."/>
            <person name="Tsuji K."/>
            <person name="Waki K."/>
            <person name="Yamagata H."/>
            <person name="Yamane H."/>
            <person name="Yoshiki S."/>
            <person name="Yoshihara R."/>
            <person name="Yukawa K."/>
            <person name="Zhong H."/>
            <person name="Iwama H."/>
            <person name="Endo T."/>
            <person name="Ito H."/>
            <person name="Hahn J.H."/>
            <person name="Kim H.-I."/>
            <person name="Eun M.-Y."/>
            <person name="Yano M."/>
            <person name="Jiang J."/>
            <person name="Gojobori T."/>
        </authorList>
    </citation>
    <scope>NUCLEOTIDE SEQUENCE [LARGE SCALE GENOMIC DNA]</scope>
    <source>
        <strain>cv. Nipponbare</strain>
    </source>
</reference>
<reference key="2">
    <citation type="journal article" date="2005" name="Nature">
        <title>The map-based sequence of the rice genome.</title>
        <authorList>
            <consortium name="International rice genome sequencing project (IRGSP)"/>
        </authorList>
    </citation>
    <scope>NUCLEOTIDE SEQUENCE [LARGE SCALE GENOMIC DNA]</scope>
    <source>
        <strain>cv. Nipponbare</strain>
    </source>
</reference>
<reference key="3">
    <citation type="journal article" date="2008" name="Nucleic Acids Res.">
        <title>The rice annotation project database (RAP-DB): 2008 update.</title>
        <authorList>
            <consortium name="The rice annotation project (RAP)"/>
        </authorList>
    </citation>
    <scope>GENOME REANNOTATION</scope>
    <source>
        <strain>cv. Nipponbare</strain>
    </source>
</reference>
<reference key="4">
    <citation type="journal article" date="2013" name="Rice">
        <title>Improvement of the Oryza sativa Nipponbare reference genome using next generation sequence and optical map data.</title>
        <authorList>
            <person name="Kawahara Y."/>
            <person name="de la Bastide M."/>
            <person name="Hamilton J.P."/>
            <person name="Kanamori H."/>
            <person name="McCombie W.R."/>
            <person name="Ouyang S."/>
            <person name="Schwartz D.C."/>
            <person name="Tanaka T."/>
            <person name="Wu J."/>
            <person name="Zhou S."/>
            <person name="Childs K.L."/>
            <person name="Davidson R.M."/>
            <person name="Lin H."/>
            <person name="Quesada-Ocampo L."/>
            <person name="Vaillancourt B."/>
            <person name="Sakai H."/>
            <person name="Lee S.S."/>
            <person name="Kim J."/>
            <person name="Numa H."/>
            <person name="Itoh T."/>
            <person name="Buell C.R."/>
            <person name="Matsumoto T."/>
        </authorList>
    </citation>
    <scope>GENOME REANNOTATION</scope>
    <source>
        <strain>cv. Nipponbare</strain>
    </source>
</reference>
<reference key="5">
    <citation type="journal article" date="2005" name="PLoS Biol.">
        <title>The genomes of Oryza sativa: a history of duplications.</title>
        <authorList>
            <person name="Yu J."/>
            <person name="Wang J."/>
            <person name="Lin W."/>
            <person name="Li S."/>
            <person name="Li H."/>
            <person name="Zhou J."/>
            <person name="Ni P."/>
            <person name="Dong W."/>
            <person name="Hu S."/>
            <person name="Zeng C."/>
            <person name="Zhang J."/>
            <person name="Zhang Y."/>
            <person name="Li R."/>
            <person name="Xu Z."/>
            <person name="Li S."/>
            <person name="Li X."/>
            <person name="Zheng H."/>
            <person name="Cong L."/>
            <person name="Lin L."/>
            <person name="Yin J."/>
            <person name="Geng J."/>
            <person name="Li G."/>
            <person name="Shi J."/>
            <person name="Liu J."/>
            <person name="Lv H."/>
            <person name="Li J."/>
            <person name="Wang J."/>
            <person name="Deng Y."/>
            <person name="Ran L."/>
            <person name="Shi X."/>
            <person name="Wang X."/>
            <person name="Wu Q."/>
            <person name="Li C."/>
            <person name="Ren X."/>
            <person name="Wang J."/>
            <person name="Wang X."/>
            <person name="Li D."/>
            <person name="Liu D."/>
            <person name="Zhang X."/>
            <person name="Ji Z."/>
            <person name="Zhao W."/>
            <person name="Sun Y."/>
            <person name="Zhang Z."/>
            <person name="Bao J."/>
            <person name="Han Y."/>
            <person name="Dong L."/>
            <person name="Ji J."/>
            <person name="Chen P."/>
            <person name="Wu S."/>
            <person name="Liu J."/>
            <person name="Xiao Y."/>
            <person name="Bu D."/>
            <person name="Tan J."/>
            <person name="Yang L."/>
            <person name="Ye C."/>
            <person name="Zhang J."/>
            <person name="Xu J."/>
            <person name="Zhou Y."/>
            <person name="Yu Y."/>
            <person name="Zhang B."/>
            <person name="Zhuang S."/>
            <person name="Wei H."/>
            <person name="Liu B."/>
            <person name="Lei M."/>
            <person name="Yu H."/>
            <person name="Li Y."/>
            <person name="Xu H."/>
            <person name="Wei S."/>
            <person name="He X."/>
            <person name="Fang L."/>
            <person name="Zhang Z."/>
            <person name="Zhang Y."/>
            <person name="Huang X."/>
            <person name="Su Z."/>
            <person name="Tong W."/>
            <person name="Li J."/>
            <person name="Tong Z."/>
            <person name="Li S."/>
            <person name="Ye J."/>
            <person name="Wang L."/>
            <person name="Fang L."/>
            <person name="Lei T."/>
            <person name="Chen C.-S."/>
            <person name="Chen H.-C."/>
            <person name="Xu Z."/>
            <person name="Li H."/>
            <person name="Huang H."/>
            <person name="Zhang F."/>
            <person name="Xu H."/>
            <person name="Li N."/>
            <person name="Zhao C."/>
            <person name="Li S."/>
            <person name="Dong L."/>
            <person name="Huang Y."/>
            <person name="Li L."/>
            <person name="Xi Y."/>
            <person name="Qi Q."/>
            <person name="Li W."/>
            <person name="Zhang B."/>
            <person name="Hu W."/>
            <person name="Zhang Y."/>
            <person name="Tian X."/>
            <person name="Jiao Y."/>
            <person name="Liang X."/>
            <person name="Jin J."/>
            <person name="Gao L."/>
            <person name="Zheng W."/>
            <person name="Hao B."/>
            <person name="Liu S.-M."/>
            <person name="Wang W."/>
            <person name="Yuan L."/>
            <person name="Cao M."/>
            <person name="McDermott J."/>
            <person name="Samudrala R."/>
            <person name="Wang J."/>
            <person name="Wong G.K.-S."/>
            <person name="Yang H."/>
        </authorList>
    </citation>
    <scope>NUCLEOTIDE SEQUENCE [LARGE SCALE GENOMIC DNA]</scope>
    <source>
        <strain>cv. Nipponbare</strain>
    </source>
</reference>
<reference key="6">
    <citation type="journal article" date="2003" name="Science">
        <title>Collection, mapping, and annotation of over 28,000 cDNA clones from japonica rice.</title>
        <authorList>
            <consortium name="The rice full-length cDNA consortium"/>
        </authorList>
    </citation>
    <scope>NUCLEOTIDE SEQUENCE [LARGE SCALE MRNA]</scope>
    <source>
        <strain>cv. Nipponbare</strain>
    </source>
</reference>